<feature type="chain" id="PRO_0000263171" description="Aspartate/glutamate leucyltransferase">
    <location>
        <begin position="1"/>
        <end position="240"/>
    </location>
</feature>
<reference key="1">
    <citation type="journal article" date="2006" name="J. Bacteriol.">
        <title>Comparison of the genome sequence of the poultry pathogen Bordetella avium with those of B. bronchiseptica, B. pertussis, and B. parapertussis reveals extensive diversity in surface structures associated with host interaction.</title>
        <authorList>
            <person name="Sebaihia M."/>
            <person name="Preston A."/>
            <person name="Maskell D.J."/>
            <person name="Kuzmiak H."/>
            <person name="Connell T.D."/>
            <person name="King N.D."/>
            <person name="Orndorff P.E."/>
            <person name="Miyamoto D.M."/>
            <person name="Thomson N.R."/>
            <person name="Harris D."/>
            <person name="Goble A."/>
            <person name="Lord A."/>
            <person name="Murphy L."/>
            <person name="Quail M.A."/>
            <person name="Rutter S."/>
            <person name="Squares R."/>
            <person name="Squares S."/>
            <person name="Woodward J."/>
            <person name="Parkhill J."/>
            <person name="Temple L.M."/>
        </authorList>
    </citation>
    <scope>NUCLEOTIDE SEQUENCE [LARGE SCALE GENOMIC DNA]</scope>
    <source>
        <strain>197N</strain>
    </source>
</reference>
<name>BPT_BORA1</name>
<comment type="function">
    <text evidence="1">Functions in the N-end rule pathway of protein degradation where it conjugates Leu from its aminoacyl-tRNA to the N-termini of proteins containing an N-terminal aspartate or glutamate.</text>
</comment>
<comment type="catalytic activity">
    <reaction evidence="1">
        <text>N-terminal L-glutamyl-[protein] + L-leucyl-tRNA(Leu) = N-terminal L-leucyl-L-glutamyl-[protein] + tRNA(Leu) + H(+)</text>
        <dbReference type="Rhea" id="RHEA:50412"/>
        <dbReference type="Rhea" id="RHEA-COMP:9613"/>
        <dbReference type="Rhea" id="RHEA-COMP:9622"/>
        <dbReference type="Rhea" id="RHEA-COMP:12664"/>
        <dbReference type="Rhea" id="RHEA-COMP:12668"/>
        <dbReference type="ChEBI" id="CHEBI:15378"/>
        <dbReference type="ChEBI" id="CHEBI:64721"/>
        <dbReference type="ChEBI" id="CHEBI:78442"/>
        <dbReference type="ChEBI" id="CHEBI:78494"/>
        <dbReference type="ChEBI" id="CHEBI:133041"/>
        <dbReference type="EC" id="2.3.2.29"/>
    </reaction>
</comment>
<comment type="catalytic activity">
    <reaction evidence="1">
        <text>N-terminal L-aspartyl-[protein] + L-leucyl-tRNA(Leu) = N-terminal L-leucyl-L-aspartyl-[protein] + tRNA(Leu) + H(+)</text>
        <dbReference type="Rhea" id="RHEA:50420"/>
        <dbReference type="Rhea" id="RHEA-COMP:9613"/>
        <dbReference type="Rhea" id="RHEA-COMP:9622"/>
        <dbReference type="Rhea" id="RHEA-COMP:12669"/>
        <dbReference type="Rhea" id="RHEA-COMP:12674"/>
        <dbReference type="ChEBI" id="CHEBI:15378"/>
        <dbReference type="ChEBI" id="CHEBI:64720"/>
        <dbReference type="ChEBI" id="CHEBI:78442"/>
        <dbReference type="ChEBI" id="CHEBI:78494"/>
        <dbReference type="ChEBI" id="CHEBI:133042"/>
        <dbReference type="EC" id="2.3.2.29"/>
    </reaction>
</comment>
<comment type="subcellular location">
    <subcellularLocation>
        <location evidence="1">Cytoplasm</location>
    </subcellularLocation>
</comment>
<comment type="similarity">
    <text evidence="1">Belongs to the R-transferase family. Bpt subfamily.</text>
</comment>
<evidence type="ECO:0000255" key="1">
    <source>
        <dbReference type="HAMAP-Rule" id="MF_00689"/>
    </source>
</evidence>
<accession>Q2KW46</accession>
<sequence length="240" mass="27748">MSQLKELPFSTLQFYATAPYPCSYLPERQARSQVAAPGHLINADTYCQLVQQGFRRSGLFTYRPHCDNCQACIPVRVDSVNYTPNRSQRRAWKAHQGLRAFVAELAWSPEHYSLYTRYQQGRHPGGGMDDDSRSQYAQFLLTSRVNTRLVEFRQPEGQLVMVSIIDVLDDGLSSVYTFYDPELAGSLGTYSILWQIEQCRMLELPWLYLGYWIKDSRKMAYKAGFLPQERYIDGQWTAPE</sequence>
<dbReference type="EC" id="2.3.2.29" evidence="1"/>
<dbReference type="EMBL" id="AM167904">
    <property type="protein sequence ID" value="CAJ50363.1"/>
    <property type="molecule type" value="Genomic_DNA"/>
</dbReference>
<dbReference type="RefSeq" id="WP_012418394.1">
    <property type="nucleotide sequence ID" value="NC_010645.1"/>
</dbReference>
<dbReference type="SMR" id="Q2KW46"/>
<dbReference type="STRING" id="360910.BAV2752"/>
<dbReference type="GeneID" id="92934001"/>
<dbReference type="KEGG" id="bav:BAV2752"/>
<dbReference type="eggNOG" id="COG2935">
    <property type="taxonomic scope" value="Bacteria"/>
</dbReference>
<dbReference type="HOGENOM" id="CLU_077607_0_0_4"/>
<dbReference type="OrthoDB" id="9782022at2"/>
<dbReference type="Proteomes" id="UP000001977">
    <property type="component" value="Chromosome"/>
</dbReference>
<dbReference type="GO" id="GO:0005737">
    <property type="term" value="C:cytoplasm"/>
    <property type="evidence" value="ECO:0007669"/>
    <property type="project" value="UniProtKB-SubCell"/>
</dbReference>
<dbReference type="GO" id="GO:0004057">
    <property type="term" value="F:arginyl-tRNA--protein transferase activity"/>
    <property type="evidence" value="ECO:0007669"/>
    <property type="project" value="InterPro"/>
</dbReference>
<dbReference type="GO" id="GO:0008914">
    <property type="term" value="F:leucyl-tRNA--protein transferase activity"/>
    <property type="evidence" value="ECO:0007669"/>
    <property type="project" value="UniProtKB-UniRule"/>
</dbReference>
<dbReference type="GO" id="GO:0071596">
    <property type="term" value="P:ubiquitin-dependent protein catabolic process via the N-end rule pathway"/>
    <property type="evidence" value="ECO:0007669"/>
    <property type="project" value="InterPro"/>
</dbReference>
<dbReference type="HAMAP" id="MF_00689">
    <property type="entry name" value="Bpt"/>
    <property type="match status" value="1"/>
</dbReference>
<dbReference type="InterPro" id="IPR016181">
    <property type="entry name" value="Acyl_CoA_acyltransferase"/>
</dbReference>
<dbReference type="InterPro" id="IPR017138">
    <property type="entry name" value="Asp_Glu_LeuTrfase"/>
</dbReference>
<dbReference type="InterPro" id="IPR030700">
    <property type="entry name" value="N-end_Aminoacyl_Trfase"/>
</dbReference>
<dbReference type="InterPro" id="IPR007472">
    <property type="entry name" value="N-end_Aminoacyl_Trfase_C"/>
</dbReference>
<dbReference type="InterPro" id="IPR007471">
    <property type="entry name" value="N-end_Aminoacyl_Trfase_N"/>
</dbReference>
<dbReference type="NCBIfam" id="NF002341">
    <property type="entry name" value="PRK01305.1-1"/>
    <property type="match status" value="1"/>
</dbReference>
<dbReference type="NCBIfam" id="NF002342">
    <property type="entry name" value="PRK01305.1-3"/>
    <property type="match status" value="1"/>
</dbReference>
<dbReference type="NCBIfam" id="NF002346">
    <property type="entry name" value="PRK01305.2-3"/>
    <property type="match status" value="1"/>
</dbReference>
<dbReference type="PANTHER" id="PTHR21367">
    <property type="entry name" value="ARGININE-TRNA-PROTEIN TRANSFERASE 1"/>
    <property type="match status" value="1"/>
</dbReference>
<dbReference type="PANTHER" id="PTHR21367:SF1">
    <property type="entry name" value="ARGINYL-TRNA--PROTEIN TRANSFERASE 1"/>
    <property type="match status" value="1"/>
</dbReference>
<dbReference type="Pfam" id="PF04377">
    <property type="entry name" value="ATE_C"/>
    <property type="match status" value="1"/>
</dbReference>
<dbReference type="Pfam" id="PF04376">
    <property type="entry name" value="ATE_N"/>
    <property type="match status" value="1"/>
</dbReference>
<dbReference type="PIRSF" id="PIRSF037208">
    <property type="entry name" value="ATE_pro_prd"/>
    <property type="match status" value="1"/>
</dbReference>
<dbReference type="SUPFAM" id="SSF55729">
    <property type="entry name" value="Acyl-CoA N-acyltransferases (Nat)"/>
    <property type="match status" value="1"/>
</dbReference>
<keyword id="KW-0012">Acyltransferase</keyword>
<keyword id="KW-0963">Cytoplasm</keyword>
<keyword id="KW-1185">Reference proteome</keyword>
<keyword id="KW-0808">Transferase</keyword>
<proteinExistence type="inferred from homology"/>
<organism>
    <name type="scientific">Bordetella avium (strain 197N)</name>
    <dbReference type="NCBI Taxonomy" id="360910"/>
    <lineage>
        <taxon>Bacteria</taxon>
        <taxon>Pseudomonadati</taxon>
        <taxon>Pseudomonadota</taxon>
        <taxon>Betaproteobacteria</taxon>
        <taxon>Burkholderiales</taxon>
        <taxon>Alcaligenaceae</taxon>
        <taxon>Bordetella</taxon>
    </lineage>
</organism>
<gene>
    <name evidence="1" type="primary">bpt</name>
    <name type="ordered locus">BAV2752</name>
</gene>
<protein>
    <recommendedName>
        <fullName evidence="1">Aspartate/glutamate leucyltransferase</fullName>
        <ecNumber evidence="1">2.3.2.29</ecNumber>
    </recommendedName>
</protein>